<evidence type="ECO:0000250" key="1"/>
<evidence type="ECO:0000250" key="2">
    <source>
        <dbReference type="UniProtKB" id="P14324"/>
    </source>
</evidence>
<evidence type="ECO:0000250" key="3">
    <source>
        <dbReference type="UniProtKB" id="Q12051"/>
    </source>
</evidence>
<evidence type="ECO:0000269" key="4">
    <source>
    </source>
</evidence>
<evidence type="ECO:0000305" key="5"/>
<keyword id="KW-0444">Lipid biosynthesis</keyword>
<keyword id="KW-0443">Lipid metabolism</keyword>
<keyword id="KW-0460">Magnesium</keyword>
<keyword id="KW-0479">Metal-binding</keyword>
<keyword id="KW-1185">Reference proteome</keyword>
<keyword id="KW-0808">Transferase</keyword>
<comment type="function">
    <text evidence="4">Catalyzes the condensation of isopentenyl pyrophosphate with the allylic pyrophosphates to yield geranylgeranyl diphosphate (GGPP) which is a precursor of the ether-linked lipids. It is able to use dimethylallyl diphosphate (DMAPP), geranyl diphosphate (GPP), and (all-E)-geranyl diphosphate (E-FPP) as an allylic substrate.</text>
</comment>
<comment type="catalytic activity">
    <reaction evidence="4">
        <text>isopentenyl diphosphate + (2E,6E)-farnesyl diphosphate = (2E,6E,10E)-geranylgeranyl diphosphate + diphosphate</text>
        <dbReference type="Rhea" id="RHEA:17653"/>
        <dbReference type="ChEBI" id="CHEBI:33019"/>
        <dbReference type="ChEBI" id="CHEBI:58756"/>
        <dbReference type="ChEBI" id="CHEBI:128769"/>
        <dbReference type="ChEBI" id="CHEBI:175763"/>
        <dbReference type="EC" id="2.5.1.29"/>
    </reaction>
</comment>
<comment type="cofactor">
    <cofactor evidence="1">
        <name>Mg(2+)</name>
        <dbReference type="ChEBI" id="CHEBI:18420"/>
    </cofactor>
    <text evidence="1">Binds 2 Mg(2+) ions per subunit.</text>
</comment>
<comment type="biophysicochemical properties">
    <phDependence>
        <text evidence="4">Optimum pH is 5.8.</text>
    </phDependence>
    <temperatureDependence>
        <text evidence="4">Thermostable. Most of the activity for GGPP synthase remains even after heating at 60 to 70 degrees Celsius for 100 minutes, although 90% of the enzyme activity is lost on incubation at 90 degrees Celsius for 10 minutes.</text>
    </temperatureDependence>
</comment>
<comment type="pathway">
    <text>Isoprenoid biosynthesis; geranylgeranyl diphosphate biosynthesis; geranylgeranyl diphosphate from farnesyl diphosphate and isopentenyl diphosphate: step 1/1.</text>
</comment>
<comment type="similarity">
    <text evidence="5">Belongs to the FPP/GGPP synthase family.</text>
</comment>
<proteinExistence type="evidence at protein level"/>
<reference key="1">
    <citation type="journal article" date="1994" name="J. Biol. Chem.">
        <title>Archaebacterial ether-linked lipid biosynthetic gene. Expression cloning, sequencing, and characterization of geranylgeranyl-diphosphate synthase.</title>
        <authorList>
            <person name="Ohnuma S."/>
            <person name="Suzuki M."/>
            <person name="Nishino T."/>
        </authorList>
    </citation>
    <scope>NUCLEOTIDE SEQUENCE [GENOMIC DNA]</scope>
    <scope>FUNCTION AS A GERANYLGERANYL DIPHOSPHATE SYNTHASE</scope>
    <scope>CATALYTIC ACTIVITY</scope>
    <scope>BIOPHYSICOCHEMICAL PROPERTIES</scope>
    <scope>SUBSTRATE SPECIFICITY</scope>
    <source>
        <strain>ATCC 33909 / DSM 639 / JCM 8929 / NBRC 15157 / NCIMB 11770</strain>
    </source>
</reference>
<reference key="2">
    <citation type="journal article" date="2005" name="J. Bacteriol.">
        <title>The genome of Sulfolobus acidocaldarius, a model organism of the Crenarchaeota.</title>
        <authorList>
            <person name="Chen L."/>
            <person name="Bruegger K."/>
            <person name="Skovgaard M."/>
            <person name="Redder P."/>
            <person name="She Q."/>
            <person name="Torarinsson E."/>
            <person name="Greve B."/>
            <person name="Awayez M."/>
            <person name="Zibat A."/>
            <person name="Klenk H.-P."/>
            <person name="Garrett R.A."/>
        </authorList>
    </citation>
    <scope>NUCLEOTIDE SEQUENCE [LARGE SCALE GENOMIC DNA]</scope>
    <source>
        <strain>ATCC 33909 / DSM 639 / JCM 8929 / NBRC 15157 / NCIMB 11770</strain>
    </source>
</reference>
<sequence>MSYFDNYFNEIVNSVNDIIKSYISGDVPKLYEASYHLFTSGGKRLRPLILTISSDLFGGQRERAYYAGAAIEVLHTFTLVHDDIMDQDNIRRGLPTVHVKYGLPLAILAGDLLHAKAFQLLTQALRGLPSETIIKAFDIFTRSIIIISEGQAVDMEFEDRIDIKEQEYLDMISRKTAALFSASSSIGALIAGANDNDVRLMSDFGTNLGIAFQIVDDILGLTADEKELGKPVFSDIREGKKTILVIKTLELCKEDEKKIVLKALGNKSASKEELMSSADIIKKYSLDYAYNLAEKYYKNAIDSLNQVSSKSDIPGKALKYLAEFTIRRRK</sequence>
<gene>
    <name type="primary">gds</name>
    <name type="ordered locus">Saci_0092</name>
</gene>
<feature type="chain" id="PRO_0000123973" description="Geranylgeranyl diphosphate synthase">
    <location>
        <begin position="1"/>
        <end position="330"/>
    </location>
</feature>
<feature type="binding site" evidence="2">
    <location>
        <position position="43"/>
    </location>
    <ligand>
        <name>isopentenyl diphosphate</name>
        <dbReference type="ChEBI" id="CHEBI:128769"/>
    </ligand>
</feature>
<feature type="binding site" evidence="2">
    <location>
        <position position="46"/>
    </location>
    <ligand>
        <name>isopentenyl diphosphate</name>
        <dbReference type="ChEBI" id="CHEBI:128769"/>
    </ligand>
</feature>
<feature type="binding site" evidence="3">
    <location>
        <position position="75"/>
    </location>
    <ligand>
        <name>isopentenyl diphosphate</name>
        <dbReference type="ChEBI" id="CHEBI:128769"/>
    </ligand>
</feature>
<feature type="binding site" evidence="2">
    <location>
        <position position="82"/>
    </location>
    <ligand>
        <name>Mg(2+)</name>
        <dbReference type="ChEBI" id="CHEBI:18420"/>
        <label>1</label>
    </ligand>
</feature>
<feature type="binding site" evidence="2">
    <location>
        <position position="82"/>
    </location>
    <ligand>
        <name>Mg(2+)</name>
        <dbReference type="ChEBI" id="CHEBI:18420"/>
        <label>2</label>
    </ligand>
</feature>
<feature type="binding site" evidence="2">
    <location>
        <position position="86"/>
    </location>
    <ligand>
        <name>Mg(2+)</name>
        <dbReference type="ChEBI" id="CHEBI:18420"/>
        <label>1</label>
    </ligand>
</feature>
<feature type="binding site" evidence="2">
    <location>
        <position position="86"/>
    </location>
    <ligand>
        <name>Mg(2+)</name>
        <dbReference type="ChEBI" id="CHEBI:18420"/>
        <label>2</label>
    </ligand>
</feature>
<feature type="binding site" evidence="1">
    <location>
        <position position="91"/>
    </location>
    <ligand>
        <name>an all-trans-polyprenyl diphosphate</name>
        <dbReference type="ChEBI" id="CHEBI:58914"/>
    </ligand>
</feature>
<feature type="binding site" evidence="2">
    <location>
        <position position="92"/>
    </location>
    <ligand>
        <name>isopentenyl diphosphate</name>
        <dbReference type="ChEBI" id="CHEBI:128769"/>
    </ligand>
</feature>
<feature type="binding site" evidence="1">
    <location>
        <position position="175"/>
    </location>
    <ligand>
        <name>an all-trans-polyprenyl diphosphate</name>
        <dbReference type="ChEBI" id="CHEBI:58914"/>
    </ligand>
</feature>
<feature type="binding site" evidence="1">
    <location>
        <position position="176"/>
    </location>
    <ligand>
        <name>an all-trans-polyprenyl diphosphate</name>
        <dbReference type="ChEBI" id="CHEBI:58914"/>
    </ligand>
</feature>
<feature type="binding site" evidence="1">
    <location>
        <position position="213"/>
    </location>
    <ligand>
        <name>an all-trans-polyprenyl diphosphate</name>
        <dbReference type="ChEBI" id="CHEBI:58914"/>
    </ligand>
</feature>
<feature type="binding site" evidence="1">
    <location>
        <position position="230"/>
    </location>
    <ligand>
        <name>an all-trans-polyprenyl diphosphate</name>
        <dbReference type="ChEBI" id="CHEBI:58914"/>
    </ligand>
</feature>
<feature type="binding site" evidence="1">
    <location>
        <position position="240"/>
    </location>
    <ligand>
        <name>an all-trans-polyprenyl diphosphate</name>
        <dbReference type="ChEBI" id="CHEBI:58914"/>
    </ligand>
</feature>
<organism>
    <name type="scientific">Sulfolobus acidocaldarius (strain ATCC 33909 / DSM 639 / JCM 8929 / NBRC 15157 / NCIMB 11770)</name>
    <dbReference type="NCBI Taxonomy" id="330779"/>
    <lineage>
        <taxon>Archaea</taxon>
        <taxon>Thermoproteota</taxon>
        <taxon>Thermoprotei</taxon>
        <taxon>Sulfolobales</taxon>
        <taxon>Sulfolobaceae</taxon>
        <taxon>Sulfolobus</taxon>
    </lineage>
</organism>
<accession>P39464</accession>
<accession>Q4JCG0</accession>
<dbReference type="EC" id="2.5.1.29"/>
<dbReference type="EMBL" id="D28748">
    <property type="protein sequence ID" value="BAA43200.1"/>
    <property type="molecule type" value="Genomic_DNA"/>
</dbReference>
<dbReference type="EMBL" id="CP000077">
    <property type="protein sequence ID" value="AAY79519.1"/>
    <property type="molecule type" value="Genomic_DNA"/>
</dbReference>
<dbReference type="PIR" id="A54058">
    <property type="entry name" value="A54058"/>
</dbReference>
<dbReference type="RefSeq" id="WP_011277020.1">
    <property type="nucleotide sequence ID" value="NC_007181.1"/>
</dbReference>
<dbReference type="SMR" id="P39464"/>
<dbReference type="STRING" id="330779.Saci_0092"/>
<dbReference type="GeneID" id="14550623"/>
<dbReference type="GeneID" id="78440447"/>
<dbReference type="KEGG" id="sai:Saci_0092"/>
<dbReference type="PATRIC" id="fig|330779.12.peg.87"/>
<dbReference type="eggNOG" id="arCOG01726">
    <property type="taxonomic scope" value="Archaea"/>
</dbReference>
<dbReference type="HOGENOM" id="CLU_014015_2_1_2"/>
<dbReference type="BRENDA" id="2.5.1.29">
    <property type="organism ID" value="6160"/>
</dbReference>
<dbReference type="UniPathway" id="UPA00389">
    <property type="reaction ID" value="UER00564"/>
</dbReference>
<dbReference type="Proteomes" id="UP000001018">
    <property type="component" value="Chromosome"/>
</dbReference>
<dbReference type="GO" id="GO:0004311">
    <property type="term" value="F:geranylgeranyl diphosphate synthase activity"/>
    <property type="evidence" value="ECO:0007669"/>
    <property type="project" value="UniProtKB-EC"/>
</dbReference>
<dbReference type="GO" id="GO:0046872">
    <property type="term" value="F:metal ion binding"/>
    <property type="evidence" value="ECO:0007669"/>
    <property type="project" value="UniProtKB-KW"/>
</dbReference>
<dbReference type="GO" id="GO:0033386">
    <property type="term" value="P:geranylgeranyl diphosphate biosynthetic process"/>
    <property type="evidence" value="ECO:0007669"/>
    <property type="project" value="UniProtKB-UniPathway"/>
</dbReference>
<dbReference type="CDD" id="cd00685">
    <property type="entry name" value="Trans_IPPS_HT"/>
    <property type="match status" value="1"/>
</dbReference>
<dbReference type="Gene3D" id="1.10.600.10">
    <property type="entry name" value="Farnesyl Diphosphate Synthase"/>
    <property type="match status" value="1"/>
</dbReference>
<dbReference type="InterPro" id="IPR053504">
    <property type="entry name" value="GGPP_synthase"/>
</dbReference>
<dbReference type="InterPro" id="IPR008949">
    <property type="entry name" value="Isoprenoid_synthase_dom_sf"/>
</dbReference>
<dbReference type="InterPro" id="IPR000092">
    <property type="entry name" value="Polyprenyl_synt"/>
</dbReference>
<dbReference type="InterPro" id="IPR033749">
    <property type="entry name" value="Polyprenyl_synt_CS"/>
</dbReference>
<dbReference type="NCBIfam" id="NF041003">
    <property type="entry name" value="GGPP_syn"/>
    <property type="match status" value="1"/>
</dbReference>
<dbReference type="PANTHER" id="PTHR12001">
    <property type="entry name" value="GERANYLGERANYL PYROPHOSPHATE SYNTHASE"/>
    <property type="match status" value="1"/>
</dbReference>
<dbReference type="PANTHER" id="PTHR12001:SF85">
    <property type="entry name" value="SHORT CHAIN ISOPRENYL DIPHOSPHATE SYNTHASE"/>
    <property type="match status" value="1"/>
</dbReference>
<dbReference type="Pfam" id="PF00348">
    <property type="entry name" value="polyprenyl_synt"/>
    <property type="match status" value="1"/>
</dbReference>
<dbReference type="SFLD" id="SFLDS00005">
    <property type="entry name" value="Isoprenoid_Synthase_Type_I"/>
    <property type="match status" value="1"/>
</dbReference>
<dbReference type="SFLD" id="SFLDG01017">
    <property type="entry name" value="Polyprenyl_Transferase_Like"/>
    <property type="match status" value="1"/>
</dbReference>
<dbReference type="SUPFAM" id="SSF48576">
    <property type="entry name" value="Terpenoid synthases"/>
    <property type="match status" value="1"/>
</dbReference>
<dbReference type="PROSITE" id="PS00723">
    <property type="entry name" value="POLYPRENYL_SYNTHASE_1"/>
    <property type="match status" value="1"/>
</dbReference>
<dbReference type="PROSITE" id="PS00444">
    <property type="entry name" value="POLYPRENYL_SYNTHASE_2"/>
    <property type="match status" value="1"/>
</dbReference>
<protein>
    <recommendedName>
        <fullName>Geranylgeranyl diphosphate synthase</fullName>
        <shortName>GGPP synthase</shortName>
        <shortName>GGPS</shortName>
        <ecNumber>2.5.1.29</ecNumber>
    </recommendedName>
</protein>
<name>GGPS_SULAC</name>